<dbReference type="EMBL" id="AE017285">
    <property type="protein sequence ID" value="AAS95785.1"/>
    <property type="molecule type" value="Genomic_DNA"/>
</dbReference>
<dbReference type="RefSeq" id="WP_010938602.1">
    <property type="nucleotide sequence ID" value="NC_002937.3"/>
</dbReference>
<dbReference type="RefSeq" id="YP_010526.1">
    <property type="nucleotide sequence ID" value="NC_002937.3"/>
</dbReference>
<dbReference type="SMR" id="Q72CH6"/>
<dbReference type="STRING" id="882.DVU_1307"/>
<dbReference type="PaxDb" id="882-DVU_1307"/>
<dbReference type="EnsemblBacteria" id="AAS95785">
    <property type="protein sequence ID" value="AAS95785"/>
    <property type="gene ID" value="DVU_1307"/>
</dbReference>
<dbReference type="KEGG" id="dvu:DVU_1307"/>
<dbReference type="PATRIC" id="fig|882.5.peg.1219"/>
<dbReference type="eggNOG" id="COG0185">
    <property type="taxonomic scope" value="Bacteria"/>
</dbReference>
<dbReference type="HOGENOM" id="CLU_144911_0_1_7"/>
<dbReference type="OrthoDB" id="9797833at2"/>
<dbReference type="PhylomeDB" id="Q72CH6"/>
<dbReference type="Proteomes" id="UP000002194">
    <property type="component" value="Chromosome"/>
</dbReference>
<dbReference type="GO" id="GO:0005737">
    <property type="term" value="C:cytoplasm"/>
    <property type="evidence" value="ECO:0007669"/>
    <property type="project" value="UniProtKB-ARBA"/>
</dbReference>
<dbReference type="GO" id="GO:0015935">
    <property type="term" value="C:small ribosomal subunit"/>
    <property type="evidence" value="ECO:0007669"/>
    <property type="project" value="InterPro"/>
</dbReference>
<dbReference type="GO" id="GO:0019843">
    <property type="term" value="F:rRNA binding"/>
    <property type="evidence" value="ECO:0007669"/>
    <property type="project" value="UniProtKB-UniRule"/>
</dbReference>
<dbReference type="GO" id="GO:0003735">
    <property type="term" value="F:structural constituent of ribosome"/>
    <property type="evidence" value="ECO:0007669"/>
    <property type="project" value="InterPro"/>
</dbReference>
<dbReference type="GO" id="GO:0000028">
    <property type="term" value="P:ribosomal small subunit assembly"/>
    <property type="evidence" value="ECO:0007669"/>
    <property type="project" value="TreeGrafter"/>
</dbReference>
<dbReference type="GO" id="GO:0006412">
    <property type="term" value="P:translation"/>
    <property type="evidence" value="ECO:0007669"/>
    <property type="project" value="UniProtKB-UniRule"/>
</dbReference>
<dbReference type="FunFam" id="3.30.860.10:FF:000001">
    <property type="entry name" value="30S ribosomal protein S19"/>
    <property type="match status" value="1"/>
</dbReference>
<dbReference type="Gene3D" id="3.30.860.10">
    <property type="entry name" value="30s Ribosomal Protein S19, Chain A"/>
    <property type="match status" value="1"/>
</dbReference>
<dbReference type="HAMAP" id="MF_00531">
    <property type="entry name" value="Ribosomal_uS19"/>
    <property type="match status" value="1"/>
</dbReference>
<dbReference type="InterPro" id="IPR002222">
    <property type="entry name" value="Ribosomal_uS19"/>
</dbReference>
<dbReference type="InterPro" id="IPR005732">
    <property type="entry name" value="Ribosomal_uS19_bac-type"/>
</dbReference>
<dbReference type="InterPro" id="IPR020934">
    <property type="entry name" value="Ribosomal_uS19_CS"/>
</dbReference>
<dbReference type="InterPro" id="IPR023575">
    <property type="entry name" value="Ribosomal_uS19_SF"/>
</dbReference>
<dbReference type="NCBIfam" id="TIGR01050">
    <property type="entry name" value="rpsS_bact"/>
    <property type="match status" value="1"/>
</dbReference>
<dbReference type="PANTHER" id="PTHR11880">
    <property type="entry name" value="RIBOSOMAL PROTEIN S19P FAMILY MEMBER"/>
    <property type="match status" value="1"/>
</dbReference>
<dbReference type="PANTHER" id="PTHR11880:SF8">
    <property type="entry name" value="SMALL RIBOSOMAL SUBUNIT PROTEIN US19M"/>
    <property type="match status" value="1"/>
</dbReference>
<dbReference type="Pfam" id="PF00203">
    <property type="entry name" value="Ribosomal_S19"/>
    <property type="match status" value="1"/>
</dbReference>
<dbReference type="PIRSF" id="PIRSF002144">
    <property type="entry name" value="Ribosomal_S19"/>
    <property type="match status" value="1"/>
</dbReference>
<dbReference type="PRINTS" id="PR00975">
    <property type="entry name" value="RIBOSOMALS19"/>
</dbReference>
<dbReference type="SUPFAM" id="SSF54570">
    <property type="entry name" value="Ribosomal protein S19"/>
    <property type="match status" value="1"/>
</dbReference>
<dbReference type="PROSITE" id="PS00323">
    <property type="entry name" value="RIBOSOMAL_S19"/>
    <property type="match status" value="1"/>
</dbReference>
<reference key="1">
    <citation type="journal article" date="2004" name="Nat. Biotechnol.">
        <title>The genome sequence of the anaerobic, sulfate-reducing bacterium Desulfovibrio vulgaris Hildenborough.</title>
        <authorList>
            <person name="Heidelberg J.F."/>
            <person name="Seshadri R."/>
            <person name="Haveman S.A."/>
            <person name="Hemme C.L."/>
            <person name="Paulsen I.T."/>
            <person name="Kolonay J.F."/>
            <person name="Eisen J.A."/>
            <person name="Ward N.L."/>
            <person name="Methe B.A."/>
            <person name="Brinkac L.M."/>
            <person name="Daugherty S.C."/>
            <person name="DeBoy R.T."/>
            <person name="Dodson R.J."/>
            <person name="Durkin A.S."/>
            <person name="Madupu R."/>
            <person name="Nelson W.C."/>
            <person name="Sullivan S.A."/>
            <person name="Fouts D.E."/>
            <person name="Haft D.H."/>
            <person name="Selengut J."/>
            <person name="Peterson J.D."/>
            <person name="Davidsen T.M."/>
            <person name="Zafar N."/>
            <person name="Zhou L."/>
            <person name="Radune D."/>
            <person name="Dimitrov G."/>
            <person name="Hance M."/>
            <person name="Tran K."/>
            <person name="Khouri H.M."/>
            <person name="Gill J."/>
            <person name="Utterback T.R."/>
            <person name="Feldblyum T.V."/>
            <person name="Wall J.D."/>
            <person name="Voordouw G."/>
            <person name="Fraser C.M."/>
        </authorList>
    </citation>
    <scope>NUCLEOTIDE SEQUENCE [LARGE SCALE GENOMIC DNA]</scope>
    <source>
        <strain>ATCC 29579 / DSM 644 / CCUG 34227 / NCIMB 8303 / VKM B-1760 / Hildenborough</strain>
    </source>
</reference>
<comment type="function">
    <text evidence="1">Protein S19 forms a complex with S13 that binds strongly to the 16S ribosomal RNA.</text>
</comment>
<comment type="similarity">
    <text evidence="1">Belongs to the universal ribosomal protein uS19 family.</text>
</comment>
<feature type="chain" id="PRO_0000129818" description="Small ribosomal subunit protein uS19">
    <location>
        <begin position="1"/>
        <end position="93"/>
    </location>
</feature>
<accession>Q72CH6</accession>
<proteinExistence type="inferred from homology"/>
<organism>
    <name type="scientific">Nitratidesulfovibrio vulgaris (strain ATCC 29579 / DSM 644 / CCUG 34227 / NCIMB 8303 / VKM B-1760 / Hildenborough)</name>
    <name type="common">Desulfovibrio vulgaris</name>
    <dbReference type="NCBI Taxonomy" id="882"/>
    <lineage>
        <taxon>Bacteria</taxon>
        <taxon>Pseudomonadati</taxon>
        <taxon>Thermodesulfobacteriota</taxon>
        <taxon>Desulfovibrionia</taxon>
        <taxon>Desulfovibrionales</taxon>
        <taxon>Desulfovibrionaceae</taxon>
        <taxon>Nitratidesulfovibrio</taxon>
    </lineage>
</organism>
<name>RS19_NITV2</name>
<sequence length="93" mass="10492">MPRSLKKGPFVDGHLMKKVDMAVANSDRRVIKTWTRRSTILPEMVGLTFAVHNGKKFMPVFVTENMVGHKLGEFAPTRTYHGHAADKKSKAKK</sequence>
<keyword id="KW-1185">Reference proteome</keyword>
<keyword id="KW-0687">Ribonucleoprotein</keyword>
<keyword id="KW-0689">Ribosomal protein</keyword>
<keyword id="KW-0694">RNA-binding</keyword>
<keyword id="KW-0699">rRNA-binding</keyword>
<evidence type="ECO:0000255" key="1">
    <source>
        <dbReference type="HAMAP-Rule" id="MF_00531"/>
    </source>
</evidence>
<evidence type="ECO:0000305" key="2"/>
<protein>
    <recommendedName>
        <fullName evidence="1">Small ribosomal subunit protein uS19</fullName>
    </recommendedName>
    <alternativeName>
        <fullName evidence="2">30S ribosomal protein S19</fullName>
    </alternativeName>
</protein>
<gene>
    <name evidence="1" type="primary">rpsS</name>
    <name type="ordered locus">DVU_1307</name>
</gene>